<evidence type="ECO:0000255" key="1">
    <source>
        <dbReference type="HAMAP-Rule" id="MF_03138"/>
    </source>
</evidence>
<accession>B9GHA6</accession>
<gene>
    <name type="ORF">POPTRDRAFT_815670</name>
</gene>
<keyword id="KW-0150">Chloroplast</keyword>
<keyword id="KW-0342">GTP-binding</keyword>
<keyword id="KW-0378">Hydrolase</keyword>
<keyword id="KW-0547">Nucleotide-binding</keyword>
<keyword id="KW-0934">Plastid</keyword>
<keyword id="KW-0648">Protein biosynthesis</keyword>
<keyword id="KW-1185">Reference proteome</keyword>
<keyword id="KW-0809">Transit peptide</keyword>
<name>GUFP_POPTR</name>
<comment type="function">
    <text evidence="1">Promotes chloroplast protein synthesis. May act as a fidelity factor of the translation reaction, by catalyzing a one-codon backward translocation of tRNAs on improperly translocated ribosomes.</text>
</comment>
<comment type="catalytic activity">
    <reaction evidence="1">
        <text>GTP + H2O = GDP + phosphate + H(+)</text>
        <dbReference type="Rhea" id="RHEA:19669"/>
        <dbReference type="ChEBI" id="CHEBI:15377"/>
        <dbReference type="ChEBI" id="CHEBI:15378"/>
        <dbReference type="ChEBI" id="CHEBI:37565"/>
        <dbReference type="ChEBI" id="CHEBI:43474"/>
        <dbReference type="ChEBI" id="CHEBI:58189"/>
    </reaction>
</comment>
<comment type="subcellular location">
    <subcellularLocation>
        <location evidence="1">Plastid</location>
        <location evidence="1">Chloroplast</location>
    </subcellularLocation>
</comment>
<comment type="similarity">
    <text evidence="1">Belongs to the TRAFAC class translation factor GTPase superfamily. Classic translation factor GTPase family. LepA subfamily.</text>
</comment>
<feature type="transit peptide" description="Chloroplast" evidence="1">
    <location>
        <begin position="1"/>
        <end position="43"/>
    </location>
</feature>
<feature type="chain" id="PRO_0000402919" description="Translation factor GUF1 homolog, chloroplastic">
    <location>
        <begin position="44"/>
        <end position="678"/>
    </location>
</feature>
<feature type="domain" description="tr-type G">
    <location>
        <begin position="81"/>
        <end position="262"/>
    </location>
</feature>
<feature type="binding site" evidence="1">
    <location>
        <begin position="90"/>
        <end position="97"/>
    </location>
    <ligand>
        <name>GTP</name>
        <dbReference type="ChEBI" id="CHEBI:37565"/>
    </ligand>
</feature>
<feature type="binding site" evidence="1">
    <location>
        <begin position="155"/>
        <end position="159"/>
    </location>
    <ligand>
        <name>GTP</name>
        <dbReference type="ChEBI" id="CHEBI:37565"/>
    </ligand>
</feature>
<feature type="binding site" evidence="1">
    <location>
        <begin position="209"/>
        <end position="212"/>
    </location>
    <ligand>
        <name>GTP</name>
        <dbReference type="ChEBI" id="CHEBI:37565"/>
    </ligand>
</feature>
<sequence>MASILLSLNTHTLLPLHTRTRTTKTTLKILRFSHKLPPSSPFYCNHETRLHLRCQTTTGTPSAADFAAAAGQDRLRKVPIKNIRNFCIIAHIDHGKSTLADKLLQMTGTVQKREMKEQFLDNMDLERERGITIKLQAARMRYVYENEGYCLNLIDTPGHVDFSYEVSRSLAACEGALLVVDASQGVEAQTLANVYLALENNLEIIPVLNKIDLPGAEPDRVCKEIEEVIGLDCSNAIHCSAKEGIGITEILNAIVERVPPPRDTAAMPLRALIFDSYYDPYRGVIVYFRVIDGNIKKGDRIYFMASEKDYYADEIGVLSPNQMQVEELYAGEVGYLSASIRSVADARVGDTITHYSRKAEQSLPGYEEATPMVFCGLFPVDADQFSELRDALEKLQLNDAALKFEPETSNAMGFGFRCGFLGLLHMEIVQERLEREYNLSLITTAPSVVYRVHCVDDDIVECSNPSLLPEPGKRRSVEEPFVKIELLTPKDYIGTLMELAQERRGEFKEMKYITENRASITYELPLAEMVGDFFDQLKSRSKGYASMEYTVVGYKESDLIRLDIQINGDPVEPLATIVHKDKAYSVGRALTQKLKELIPRQMFKVPIQACIGAKVIASESLSAIRKDVLAKCYGGDISRKKKLLKKQAAGKKRMKAIGKVDVPQEAFMAVLKLEKEVL</sequence>
<reference key="1">
    <citation type="journal article" date="2006" name="Science">
        <title>The genome of black cottonwood, Populus trichocarpa (Torr. &amp; Gray).</title>
        <authorList>
            <person name="Tuskan G.A."/>
            <person name="Difazio S."/>
            <person name="Jansson S."/>
            <person name="Bohlmann J."/>
            <person name="Grigoriev I."/>
            <person name="Hellsten U."/>
            <person name="Putnam N."/>
            <person name="Ralph S."/>
            <person name="Rombauts S."/>
            <person name="Salamov A."/>
            <person name="Schein J."/>
            <person name="Sterck L."/>
            <person name="Aerts A."/>
            <person name="Bhalerao R.R."/>
            <person name="Bhalerao R.P."/>
            <person name="Blaudez D."/>
            <person name="Boerjan W."/>
            <person name="Brun A."/>
            <person name="Brunner A."/>
            <person name="Busov V."/>
            <person name="Campbell M."/>
            <person name="Carlson J."/>
            <person name="Chalot M."/>
            <person name="Chapman J."/>
            <person name="Chen G.-L."/>
            <person name="Cooper D."/>
            <person name="Coutinho P.M."/>
            <person name="Couturier J."/>
            <person name="Covert S."/>
            <person name="Cronk Q."/>
            <person name="Cunningham R."/>
            <person name="Davis J."/>
            <person name="Degroeve S."/>
            <person name="Dejardin A."/>
            <person name="dePamphilis C.W."/>
            <person name="Detter J."/>
            <person name="Dirks B."/>
            <person name="Dubchak I."/>
            <person name="Duplessis S."/>
            <person name="Ehlting J."/>
            <person name="Ellis B."/>
            <person name="Gendler K."/>
            <person name="Goodstein D."/>
            <person name="Gribskov M."/>
            <person name="Grimwood J."/>
            <person name="Groover A."/>
            <person name="Gunter L."/>
            <person name="Hamberger B."/>
            <person name="Heinze B."/>
            <person name="Helariutta Y."/>
            <person name="Henrissat B."/>
            <person name="Holligan D."/>
            <person name="Holt R."/>
            <person name="Huang W."/>
            <person name="Islam-Faridi N."/>
            <person name="Jones S."/>
            <person name="Jones-Rhoades M."/>
            <person name="Jorgensen R."/>
            <person name="Joshi C."/>
            <person name="Kangasjaervi J."/>
            <person name="Karlsson J."/>
            <person name="Kelleher C."/>
            <person name="Kirkpatrick R."/>
            <person name="Kirst M."/>
            <person name="Kohler A."/>
            <person name="Kalluri U."/>
            <person name="Larimer F."/>
            <person name="Leebens-Mack J."/>
            <person name="Leple J.-C."/>
            <person name="Locascio P."/>
            <person name="Lou Y."/>
            <person name="Lucas S."/>
            <person name="Martin F."/>
            <person name="Montanini B."/>
            <person name="Napoli C."/>
            <person name="Nelson D.R."/>
            <person name="Nelson C."/>
            <person name="Nieminen K."/>
            <person name="Nilsson O."/>
            <person name="Pereda V."/>
            <person name="Peter G."/>
            <person name="Philippe R."/>
            <person name="Pilate G."/>
            <person name="Poliakov A."/>
            <person name="Razumovskaya J."/>
            <person name="Richardson P."/>
            <person name="Rinaldi C."/>
            <person name="Ritland K."/>
            <person name="Rouze P."/>
            <person name="Ryaboy D."/>
            <person name="Schmutz J."/>
            <person name="Schrader J."/>
            <person name="Segerman B."/>
            <person name="Shin H."/>
            <person name="Siddiqui A."/>
            <person name="Sterky F."/>
            <person name="Terry A."/>
            <person name="Tsai C.-J."/>
            <person name="Uberbacher E."/>
            <person name="Unneberg P."/>
            <person name="Vahala J."/>
            <person name="Wall K."/>
            <person name="Wessler S."/>
            <person name="Yang G."/>
            <person name="Yin T."/>
            <person name="Douglas C."/>
            <person name="Marra M."/>
            <person name="Sandberg G."/>
            <person name="Van de Peer Y."/>
            <person name="Rokhsar D.S."/>
        </authorList>
    </citation>
    <scope>NUCLEOTIDE SEQUENCE [LARGE SCALE GENOMIC DNA]</scope>
    <source>
        <strain>cv. Nisqually</strain>
    </source>
</reference>
<reference key="2">
    <citation type="submission" date="2008-12" db="EMBL/GenBank/DDBJ databases">
        <authorList>
            <consortium name="US DOE Joint Genome Institute (JGI-PGF)"/>
            <person name="Grigoriev I.V."/>
            <person name="Terry A."/>
            <person name="Salamov A.A."/>
            <person name="Otillar R."/>
            <person name="Lou Y."/>
            <person name="Lucas S."/>
            <person name="Hammon N."/>
            <person name="Glavina del Rio T."/>
            <person name="Detter J."/>
            <person name="Kalin E."/>
            <person name="Tice H."/>
            <person name="Pitluck S."/>
            <person name="Chapman J."/>
            <person name="Putnam N.H."/>
            <person name="Brunner A."/>
            <person name="Busov V."/>
            <person name="Campbell M."/>
            <person name="Chalot M."/>
            <person name="Covert S."/>
            <person name="Davis J."/>
            <person name="DiFazio S."/>
            <person name="Gribskov M."/>
            <person name="Gunter L."/>
            <person name="Hamberger B."/>
            <person name="Jansson S."/>
            <person name="Joshi C."/>
            <person name="Larimer F."/>
            <person name="Martin F."/>
            <person name="Napoli C."/>
            <person name="Nelson D."/>
            <person name="Ralph S."/>
            <person name="Rombauts S."/>
            <person name="Rouze P."/>
            <person name="Schrader J."/>
            <person name="Tsai C."/>
            <person name="Vahala J."/>
            <person name="Tuskan G."/>
            <person name="Rokhsar D."/>
        </authorList>
    </citation>
    <scope>GENOME REANNOTATION</scope>
    <source>
        <strain>cv. Nisqually</strain>
    </source>
</reference>
<organism>
    <name type="scientific">Populus trichocarpa</name>
    <name type="common">Western balsam poplar</name>
    <name type="synonym">Populus balsamifera subsp. trichocarpa</name>
    <dbReference type="NCBI Taxonomy" id="3694"/>
    <lineage>
        <taxon>Eukaryota</taxon>
        <taxon>Viridiplantae</taxon>
        <taxon>Streptophyta</taxon>
        <taxon>Embryophyta</taxon>
        <taxon>Tracheophyta</taxon>
        <taxon>Spermatophyta</taxon>
        <taxon>Magnoliopsida</taxon>
        <taxon>eudicotyledons</taxon>
        <taxon>Gunneridae</taxon>
        <taxon>Pentapetalae</taxon>
        <taxon>rosids</taxon>
        <taxon>fabids</taxon>
        <taxon>Malpighiales</taxon>
        <taxon>Salicaceae</taxon>
        <taxon>Saliceae</taxon>
        <taxon>Populus</taxon>
    </lineage>
</organism>
<protein>
    <recommendedName>
        <fullName evidence="1">Translation factor GUF1 homolog, chloroplastic</fullName>
        <ecNumber>3.6.5.-</ecNumber>
    </recommendedName>
    <alternativeName>
        <fullName evidence="1">Elongation factor 4 homolog</fullName>
        <shortName evidence="1">EF-4</shortName>
    </alternativeName>
    <alternativeName>
        <fullName evidence="1">GTPase GUF1 homolog</fullName>
    </alternativeName>
    <alternativeName>
        <fullName evidence="1">Ribosomal back-translocase</fullName>
    </alternativeName>
</protein>
<dbReference type="EC" id="3.6.5.-"/>
<dbReference type="EMBL" id="CM009290">
    <property type="protein sequence ID" value="EEE85028.2"/>
    <property type="molecule type" value="Genomic_DNA"/>
</dbReference>
<dbReference type="RefSeq" id="XP_002300223.2">
    <property type="nucleotide sequence ID" value="XM_002300187.2"/>
</dbReference>
<dbReference type="SMR" id="B9GHA6"/>
<dbReference type="FunCoup" id="B9GHA6">
    <property type="interactions" value="1062"/>
</dbReference>
<dbReference type="STRING" id="3694.B9GHA6"/>
<dbReference type="KEGG" id="pop:7465026"/>
<dbReference type="eggNOG" id="KOG0462">
    <property type="taxonomic scope" value="Eukaryota"/>
</dbReference>
<dbReference type="HOGENOM" id="CLU_009995_3_3_1"/>
<dbReference type="InParanoid" id="B9GHA6"/>
<dbReference type="OrthoDB" id="1074at2759"/>
<dbReference type="Proteomes" id="UP000006729">
    <property type="component" value="Chromosome 1"/>
</dbReference>
<dbReference type="ExpressionAtlas" id="B9GHA6">
    <property type="expression patterns" value="baseline and differential"/>
</dbReference>
<dbReference type="GO" id="GO:0009507">
    <property type="term" value="C:chloroplast"/>
    <property type="evidence" value="ECO:0007669"/>
    <property type="project" value="UniProtKB-SubCell"/>
</dbReference>
<dbReference type="GO" id="GO:0005525">
    <property type="term" value="F:GTP binding"/>
    <property type="evidence" value="ECO:0007669"/>
    <property type="project" value="UniProtKB-UniRule"/>
</dbReference>
<dbReference type="GO" id="GO:0003924">
    <property type="term" value="F:GTPase activity"/>
    <property type="evidence" value="ECO:0007669"/>
    <property type="project" value="UniProtKB-UniRule"/>
</dbReference>
<dbReference type="GO" id="GO:0043022">
    <property type="term" value="F:ribosome binding"/>
    <property type="evidence" value="ECO:0000318"/>
    <property type="project" value="GO_Central"/>
</dbReference>
<dbReference type="GO" id="GO:0045727">
    <property type="term" value="P:positive regulation of translation"/>
    <property type="evidence" value="ECO:0000318"/>
    <property type="project" value="GO_Central"/>
</dbReference>
<dbReference type="GO" id="GO:0006412">
    <property type="term" value="P:translation"/>
    <property type="evidence" value="ECO:0007669"/>
    <property type="project" value="UniProtKB-KW"/>
</dbReference>
<dbReference type="CDD" id="cd03699">
    <property type="entry name" value="EF4_II"/>
    <property type="match status" value="1"/>
</dbReference>
<dbReference type="CDD" id="cd16260">
    <property type="entry name" value="EF4_III"/>
    <property type="match status" value="1"/>
</dbReference>
<dbReference type="CDD" id="cd01890">
    <property type="entry name" value="LepA"/>
    <property type="match status" value="1"/>
</dbReference>
<dbReference type="CDD" id="cd03709">
    <property type="entry name" value="lepA_C"/>
    <property type="match status" value="1"/>
</dbReference>
<dbReference type="FunFam" id="3.40.50.300:FF:000078">
    <property type="entry name" value="Elongation factor 4"/>
    <property type="match status" value="1"/>
</dbReference>
<dbReference type="FunFam" id="2.40.30.10:FF:000015">
    <property type="entry name" value="Translation factor GUF1, mitochondrial"/>
    <property type="match status" value="1"/>
</dbReference>
<dbReference type="FunFam" id="3.30.70.240:FF:000007">
    <property type="entry name" value="Translation factor GUF1, mitochondrial"/>
    <property type="match status" value="1"/>
</dbReference>
<dbReference type="FunFam" id="3.30.70.2570:FF:000001">
    <property type="entry name" value="Translation factor GUF1, mitochondrial"/>
    <property type="match status" value="1"/>
</dbReference>
<dbReference type="FunFam" id="3.30.70.870:FF:000004">
    <property type="entry name" value="Translation factor GUF1, mitochondrial"/>
    <property type="match status" value="1"/>
</dbReference>
<dbReference type="Gene3D" id="3.30.70.240">
    <property type="match status" value="1"/>
</dbReference>
<dbReference type="Gene3D" id="3.30.70.2570">
    <property type="entry name" value="Elongation factor 4, C-terminal domain"/>
    <property type="match status" value="1"/>
</dbReference>
<dbReference type="Gene3D" id="3.30.70.870">
    <property type="entry name" value="Elongation Factor G (Translational Gtpase), domain 3"/>
    <property type="match status" value="1"/>
</dbReference>
<dbReference type="Gene3D" id="3.40.50.300">
    <property type="entry name" value="P-loop containing nucleotide triphosphate hydrolases"/>
    <property type="match status" value="1"/>
</dbReference>
<dbReference type="Gene3D" id="2.40.30.10">
    <property type="entry name" value="Translation factors"/>
    <property type="match status" value="1"/>
</dbReference>
<dbReference type="HAMAP" id="MF_03138">
    <property type="entry name" value="GUFP"/>
    <property type="match status" value="1"/>
</dbReference>
<dbReference type="HAMAP" id="MF_00071">
    <property type="entry name" value="LepA"/>
    <property type="match status" value="1"/>
</dbReference>
<dbReference type="InterPro" id="IPR006297">
    <property type="entry name" value="EF-4"/>
</dbReference>
<dbReference type="InterPro" id="IPR035647">
    <property type="entry name" value="EFG_III/V"/>
</dbReference>
<dbReference type="InterPro" id="IPR000640">
    <property type="entry name" value="EFG_V-like"/>
</dbReference>
<dbReference type="InterPro" id="IPR004161">
    <property type="entry name" value="EFTu-like_2"/>
</dbReference>
<dbReference type="InterPro" id="IPR031157">
    <property type="entry name" value="G_TR_CS"/>
</dbReference>
<dbReference type="InterPro" id="IPR027518">
    <property type="entry name" value="GUFP"/>
</dbReference>
<dbReference type="InterPro" id="IPR038363">
    <property type="entry name" value="LepA_C_sf"/>
</dbReference>
<dbReference type="InterPro" id="IPR013842">
    <property type="entry name" value="LepA_CTD"/>
</dbReference>
<dbReference type="InterPro" id="IPR035654">
    <property type="entry name" value="LepA_IV"/>
</dbReference>
<dbReference type="InterPro" id="IPR027417">
    <property type="entry name" value="P-loop_NTPase"/>
</dbReference>
<dbReference type="InterPro" id="IPR005225">
    <property type="entry name" value="Small_GTP-bd"/>
</dbReference>
<dbReference type="InterPro" id="IPR000795">
    <property type="entry name" value="T_Tr_GTP-bd_dom"/>
</dbReference>
<dbReference type="InterPro" id="IPR009000">
    <property type="entry name" value="Transl_B-barrel_sf"/>
</dbReference>
<dbReference type="NCBIfam" id="TIGR01393">
    <property type="entry name" value="lepA"/>
    <property type="match status" value="1"/>
</dbReference>
<dbReference type="NCBIfam" id="TIGR00231">
    <property type="entry name" value="small_GTP"/>
    <property type="match status" value="1"/>
</dbReference>
<dbReference type="PANTHER" id="PTHR43512:SF4">
    <property type="entry name" value="TRANSLATION FACTOR GUF1 HOMOLOG, CHLOROPLASTIC"/>
    <property type="match status" value="1"/>
</dbReference>
<dbReference type="PANTHER" id="PTHR43512">
    <property type="entry name" value="TRANSLATION FACTOR GUF1-RELATED"/>
    <property type="match status" value="1"/>
</dbReference>
<dbReference type="Pfam" id="PF00679">
    <property type="entry name" value="EFG_C"/>
    <property type="match status" value="1"/>
</dbReference>
<dbReference type="Pfam" id="PF00009">
    <property type="entry name" value="GTP_EFTU"/>
    <property type="match status" value="1"/>
</dbReference>
<dbReference type="Pfam" id="PF03144">
    <property type="entry name" value="GTP_EFTU_D2"/>
    <property type="match status" value="1"/>
</dbReference>
<dbReference type="Pfam" id="PF06421">
    <property type="entry name" value="LepA_C"/>
    <property type="match status" value="1"/>
</dbReference>
<dbReference type="PRINTS" id="PR00315">
    <property type="entry name" value="ELONGATNFCT"/>
</dbReference>
<dbReference type="SMART" id="SM00838">
    <property type="entry name" value="EFG_C"/>
    <property type="match status" value="1"/>
</dbReference>
<dbReference type="SUPFAM" id="SSF54980">
    <property type="entry name" value="EF-G C-terminal domain-like"/>
    <property type="match status" value="2"/>
</dbReference>
<dbReference type="SUPFAM" id="SSF52540">
    <property type="entry name" value="P-loop containing nucleoside triphosphate hydrolases"/>
    <property type="match status" value="1"/>
</dbReference>
<dbReference type="SUPFAM" id="SSF50447">
    <property type="entry name" value="Translation proteins"/>
    <property type="match status" value="1"/>
</dbReference>
<dbReference type="PROSITE" id="PS00301">
    <property type="entry name" value="G_TR_1"/>
    <property type="match status" value="1"/>
</dbReference>
<dbReference type="PROSITE" id="PS51722">
    <property type="entry name" value="G_TR_2"/>
    <property type="match status" value="1"/>
</dbReference>
<proteinExistence type="inferred from homology"/>